<keyword id="KW-0067">ATP-binding</keyword>
<keyword id="KW-0547">Nucleotide-binding</keyword>
<keyword id="KW-0548">Nucleotidyltransferase</keyword>
<keyword id="KW-0808">Transferase</keyword>
<feature type="chain" id="PRO_1000092203" description="Sulfate adenylyltransferase subunit 2">
    <location>
        <begin position="1"/>
        <end position="302"/>
    </location>
</feature>
<gene>
    <name evidence="1" type="primary">cysD</name>
    <name type="ordered locus">ECSE_3004</name>
</gene>
<sequence>MDQKRLTHLRQLEAESIHIIREVAAEFSNPVMLYSIGKDSSVMLHLARKAFYPGTLPFPLLHVDTGWKFREMYEFRDRTAKAYGCELLVHKNPEGVAMGINPFVHGSAKHTDIMKTEGLKQALNKYGFDAAFGGARRDEEKSRAKERIYSFRDRFHRWDPKNQRPELWHNYNGQINKGESIRVFPLSNWTEQDIWQYIWLENIDIVPLYLAAERPVLERDGMLMMIDDNRIDLQPGEVIKKRMVRFRTLGCWPLTGAVESNAQTLPEIIEEMLVSTTSERQGRVIDRDQAGSMELKKRQGYF</sequence>
<dbReference type="EC" id="2.7.7.4" evidence="1"/>
<dbReference type="EMBL" id="AP009240">
    <property type="protein sequence ID" value="BAG78528.1"/>
    <property type="molecule type" value="Genomic_DNA"/>
</dbReference>
<dbReference type="RefSeq" id="WP_000372392.1">
    <property type="nucleotide sequence ID" value="NC_011415.1"/>
</dbReference>
<dbReference type="SMR" id="B6I6E2"/>
<dbReference type="GeneID" id="89517568"/>
<dbReference type="KEGG" id="ecy:ECSE_3004"/>
<dbReference type="HOGENOM" id="CLU_043026_0_0_6"/>
<dbReference type="UniPathway" id="UPA00140">
    <property type="reaction ID" value="UER00204"/>
</dbReference>
<dbReference type="Proteomes" id="UP000008199">
    <property type="component" value="Chromosome"/>
</dbReference>
<dbReference type="GO" id="GO:0005524">
    <property type="term" value="F:ATP binding"/>
    <property type="evidence" value="ECO:0007669"/>
    <property type="project" value="UniProtKB-KW"/>
</dbReference>
<dbReference type="GO" id="GO:0004781">
    <property type="term" value="F:sulfate adenylyltransferase (ATP) activity"/>
    <property type="evidence" value="ECO:0007669"/>
    <property type="project" value="UniProtKB-UniRule"/>
</dbReference>
<dbReference type="GO" id="GO:0070814">
    <property type="term" value="P:hydrogen sulfide biosynthetic process"/>
    <property type="evidence" value="ECO:0007669"/>
    <property type="project" value="UniProtKB-UniRule"/>
</dbReference>
<dbReference type="GO" id="GO:0000103">
    <property type="term" value="P:sulfate assimilation"/>
    <property type="evidence" value="ECO:0007669"/>
    <property type="project" value="UniProtKB-UniRule"/>
</dbReference>
<dbReference type="CDD" id="cd23946">
    <property type="entry name" value="Sulfate_adenylyltransferase_2"/>
    <property type="match status" value="1"/>
</dbReference>
<dbReference type="FunFam" id="3.40.50.620:FF:000002">
    <property type="entry name" value="Sulfate adenylyltransferase subunit 2"/>
    <property type="match status" value="1"/>
</dbReference>
<dbReference type="Gene3D" id="3.40.50.620">
    <property type="entry name" value="HUPs"/>
    <property type="match status" value="1"/>
</dbReference>
<dbReference type="HAMAP" id="MF_00064">
    <property type="entry name" value="Sulf_adenylyltr_sub2"/>
    <property type="match status" value="1"/>
</dbReference>
<dbReference type="InterPro" id="IPR002500">
    <property type="entry name" value="PAPS_reduct_dom"/>
</dbReference>
<dbReference type="InterPro" id="IPR014729">
    <property type="entry name" value="Rossmann-like_a/b/a_fold"/>
</dbReference>
<dbReference type="InterPro" id="IPR011784">
    <property type="entry name" value="SO4_adenylTrfase_ssu"/>
</dbReference>
<dbReference type="InterPro" id="IPR050128">
    <property type="entry name" value="Sulfate_adenylyltrnsfr_sub2"/>
</dbReference>
<dbReference type="NCBIfam" id="TIGR02039">
    <property type="entry name" value="CysD"/>
    <property type="match status" value="1"/>
</dbReference>
<dbReference type="NCBIfam" id="NF003587">
    <property type="entry name" value="PRK05253.1"/>
    <property type="match status" value="1"/>
</dbReference>
<dbReference type="NCBIfam" id="NF009214">
    <property type="entry name" value="PRK12563.1"/>
    <property type="match status" value="1"/>
</dbReference>
<dbReference type="PANTHER" id="PTHR43196">
    <property type="entry name" value="SULFATE ADENYLYLTRANSFERASE SUBUNIT 2"/>
    <property type="match status" value="1"/>
</dbReference>
<dbReference type="PANTHER" id="PTHR43196:SF1">
    <property type="entry name" value="SULFATE ADENYLYLTRANSFERASE SUBUNIT 2"/>
    <property type="match status" value="1"/>
</dbReference>
<dbReference type="Pfam" id="PF01507">
    <property type="entry name" value="PAPS_reduct"/>
    <property type="match status" value="1"/>
</dbReference>
<dbReference type="PIRSF" id="PIRSF002936">
    <property type="entry name" value="CysDAde_trans"/>
    <property type="match status" value="1"/>
</dbReference>
<dbReference type="SUPFAM" id="SSF52402">
    <property type="entry name" value="Adenine nucleotide alpha hydrolases-like"/>
    <property type="match status" value="1"/>
</dbReference>
<proteinExistence type="inferred from homology"/>
<comment type="function">
    <text evidence="1">With CysN forms the ATP sulfurylase (ATPS) that catalyzes the adenylation of sulfate producing adenosine 5'-phosphosulfate (APS) and diphosphate, the first enzymatic step in sulfur assimilation pathway. APS synthesis involves the formation of a high-energy phosphoric-sulfuric acid anhydride bond driven by GTP hydrolysis by CysN coupled to ATP hydrolysis by CysD.</text>
</comment>
<comment type="catalytic activity">
    <reaction evidence="1">
        <text>sulfate + ATP + H(+) = adenosine 5'-phosphosulfate + diphosphate</text>
        <dbReference type="Rhea" id="RHEA:18133"/>
        <dbReference type="ChEBI" id="CHEBI:15378"/>
        <dbReference type="ChEBI" id="CHEBI:16189"/>
        <dbReference type="ChEBI" id="CHEBI:30616"/>
        <dbReference type="ChEBI" id="CHEBI:33019"/>
        <dbReference type="ChEBI" id="CHEBI:58243"/>
        <dbReference type="EC" id="2.7.7.4"/>
    </reaction>
</comment>
<comment type="pathway">
    <text evidence="1">Sulfur metabolism; hydrogen sulfide biosynthesis; sulfite from sulfate: step 1/3.</text>
</comment>
<comment type="subunit">
    <text evidence="1">Heterodimer composed of CysD, the smaller subunit, and CysN.</text>
</comment>
<comment type="similarity">
    <text evidence="1">Belongs to the PAPS reductase family. CysD subfamily.</text>
</comment>
<protein>
    <recommendedName>
        <fullName evidence="1">Sulfate adenylyltransferase subunit 2</fullName>
        <ecNumber evidence="1">2.7.7.4</ecNumber>
    </recommendedName>
    <alternativeName>
        <fullName evidence="1">ATP-sulfurylase small subunit</fullName>
    </alternativeName>
    <alternativeName>
        <fullName evidence="1">Sulfate adenylate transferase</fullName>
        <shortName evidence="1">SAT</shortName>
    </alternativeName>
</protein>
<evidence type="ECO:0000255" key="1">
    <source>
        <dbReference type="HAMAP-Rule" id="MF_00064"/>
    </source>
</evidence>
<accession>B6I6E2</accession>
<organism>
    <name type="scientific">Escherichia coli (strain SE11)</name>
    <dbReference type="NCBI Taxonomy" id="409438"/>
    <lineage>
        <taxon>Bacteria</taxon>
        <taxon>Pseudomonadati</taxon>
        <taxon>Pseudomonadota</taxon>
        <taxon>Gammaproteobacteria</taxon>
        <taxon>Enterobacterales</taxon>
        <taxon>Enterobacteriaceae</taxon>
        <taxon>Escherichia</taxon>
    </lineage>
</organism>
<reference key="1">
    <citation type="journal article" date="2008" name="DNA Res.">
        <title>Complete genome sequence and comparative analysis of the wild-type commensal Escherichia coli strain SE11 isolated from a healthy adult.</title>
        <authorList>
            <person name="Oshima K."/>
            <person name="Toh H."/>
            <person name="Ogura Y."/>
            <person name="Sasamoto H."/>
            <person name="Morita H."/>
            <person name="Park S.-H."/>
            <person name="Ooka T."/>
            <person name="Iyoda S."/>
            <person name="Taylor T.D."/>
            <person name="Hayashi T."/>
            <person name="Itoh K."/>
            <person name="Hattori M."/>
        </authorList>
    </citation>
    <scope>NUCLEOTIDE SEQUENCE [LARGE SCALE GENOMIC DNA]</scope>
    <source>
        <strain>SE11</strain>
    </source>
</reference>
<name>CYSD_ECOSE</name>